<protein>
    <recommendedName>
        <fullName evidence="1">Aspartate carbamoyltransferase catalytic subunit</fullName>
        <ecNumber evidence="1">2.1.3.2</ecNumber>
    </recommendedName>
    <alternativeName>
        <fullName evidence="1">Aspartate transcarbamylase</fullName>
        <shortName evidence="1">ATCase</shortName>
    </alternativeName>
</protein>
<dbReference type="EC" id="2.1.3.2" evidence="1"/>
<dbReference type="EMBL" id="CP000382">
    <property type="protein sequence ID" value="ABK61829.1"/>
    <property type="molecule type" value="Genomic_DNA"/>
</dbReference>
<dbReference type="RefSeq" id="WP_011722871.1">
    <property type="nucleotide sequence ID" value="NC_008593.1"/>
</dbReference>
<dbReference type="SMR" id="A0Q2N5"/>
<dbReference type="STRING" id="386415.NT01CX_0395"/>
<dbReference type="KEGG" id="cno:NT01CX_0395"/>
<dbReference type="eggNOG" id="COG0540">
    <property type="taxonomic scope" value="Bacteria"/>
</dbReference>
<dbReference type="HOGENOM" id="CLU_043846_1_2_9"/>
<dbReference type="UniPathway" id="UPA00070">
    <property type="reaction ID" value="UER00116"/>
</dbReference>
<dbReference type="Proteomes" id="UP000008220">
    <property type="component" value="Chromosome"/>
</dbReference>
<dbReference type="GO" id="GO:0016597">
    <property type="term" value="F:amino acid binding"/>
    <property type="evidence" value="ECO:0007669"/>
    <property type="project" value="InterPro"/>
</dbReference>
<dbReference type="GO" id="GO:0004070">
    <property type="term" value="F:aspartate carbamoyltransferase activity"/>
    <property type="evidence" value="ECO:0007669"/>
    <property type="project" value="UniProtKB-UniRule"/>
</dbReference>
<dbReference type="GO" id="GO:0006207">
    <property type="term" value="P:'de novo' pyrimidine nucleobase biosynthetic process"/>
    <property type="evidence" value="ECO:0007669"/>
    <property type="project" value="InterPro"/>
</dbReference>
<dbReference type="GO" id="GO:0044205">
    <property type="term" value="P:'de novo' UMP biosynthetic process"/>
    <property type="evidence" value="ECO:0007669"/>
    <property type="project" value="UniProtKB-UniRule"/>
</dbReference>
<dbReference type="GO" id="GO:0006520">
    <property type="term" value="P:amino acid metabolic process"/>
    <property type="evidence" value="ECO:0007669"/>
    <property type="project" value="InterPro"/>
</dbReference>
<dbReference type="FunFam" id="3.40.50.1370:FF:000001">
    <property type="entry name" value="Aspartate carbamoyltransferase"/>
    <property type="match status" value="1"/>
</dbReference>
<dbReference type="FunFam" id="3.40.50.1370:FF:000002">
    <property type="entry name" value="Aspartate carbamoyltransferase 2"/>
    <property type="match status" value="1"/>
</dbReference>
<dbReference type="Gene3D" id="3.40.50.1370">
    <property type="entry name" value="Aspartate/ornithine carbamoyltransferase"/>
    <property type="match status" value="2"/>
</dbReference>
<dbReference type="HAMAP" id="MF_00001">
    <property type="entry name" value="Asp_carb_tr"/>
    <property type="match status" value="1"/>
</dbReference>
<dbReference type="InterPro" id="IPR006132">
    <property type="entry name" value="Asp/Orn_carbamoyltranf_P-bd"/>
</dbReference>
<dbReference type="InterPro" id="IPR006130">
    <property type="entry name" value="Asp/Orn_carbamoylTrfase"/>
</dbReference>
<dbReference type="InterPro" id="IPR036901">
    <property type="entry name" value="Asp/Orn_carbamoylTrfase_sf"/>
</dbReference>
<dbReference type="InterPro" id="IPR002082">
    <property type="entry name" value="Asp_carbamoyltransf"/>
</dbReference>
<dbReference type="InterPro" id="IPR006131">
    <property type="entry name" value="Asp_carbamoyltransf_Asp/Orn-bd"/>
</dbReference>
<dbReference type="NCBIfam" id="TIGR00670">
    <property type="entry name" value="asp_carb_tr"/>
    <property type="match status" value="1"/>
</dbReference>
<dbReference type="NCBIfam" id="NF002032">
    <property type="entry name" value="PRK00856.1"/>
    <property type="match status" value="1"/>
</dbReference>
<dbReference type="PANTHER" id="PTHR45753:SF6">
    <property type="entry name" value="ASPARTATE CARBAMOYLTRANSFERASE"/>
    <property type="match status" value="1"/>
</dbReference>
<dbReference type="PANTHER" id="PTHR45753">
    <property type="entry name" value="ORNITHINE CARBAMOYLTRANSFERASE, MITOCHONDRIAL"/>
    <property type="match status" value="1"/>
</dbReference>
<dbReference type="Pfam" id="PF00185">
    <property type="entry name" value="OTCace"/>
    <property type="match status" value="1"/>
</dbReference>
<dbReference type="Pfam" id="PF02729">
    <property type="entry name" value="OTCace_N"/>
    <property type="match status" value="1"/>
</dbReference>
<dbReference type="PRINTS" id="PR00100">
    <property type="entry name" value="AOTCASE"/>
</dbReference>
<dbReference type="PRINTS" id="PR00101">
    <property type="entry name" value="ATCASE"/>
</dbReference>
<dbReference type="SUPFAM" id="SSF53671">
    <property type="entry name" value="Aspartate/ornithine carbamoyltransferase"/>
    <property type="match status" value="1"/>
</dbReference>
<dbReference type="PROSITE" id="PS00097">
    <property type="entry name" value="CARBAMOYLTRANSFERASE"/>
    <property type="match status" value="1"/>
</dbReference>
<accession>A0Q2N5</accession>
<name>PYRB_CLONN</name>
<sequence length="306" mass="34846">MLQGRNLIDPMDFSVEELEEVFSLADKIIENPKKYSKVCEGKLLATLFYEPSTRTRLSFEAAMLRLGGKVLGFSDANCSSVSKGESLEDTIKIVSGYTDVIAIRHPKEGAAEVASKHSYVPIINAGDGGHQHPTQTLTDLLTIRRIKGDFSNHTIGLCGDLKFGRTVHSLVKALSRYENNKFILISPKELKIPDYIKEFLNERNIEFKEVDKLEDVIGELDILYMTRVQKERFEDKEEYIRLKDTYVLDKEKMNVAKEDMMVLHPLPRVNEISTNVDDDKRACYFKQARFGMFVRMALIAKVLGVE</sequence>
<proteinExistence type="inferred from homology"/>
<evidence type="ECO:0000255" key="1">
    <source>
        <dbReference type="HAMAP-Rule" id="MF_00001"/>
    </source>
</evidence>
<gene>
    <name evidence="1" type="primary">pyrB</name>
    <name type="ordered locus">NT01CX_0395</name>
</gene>
<reference key="1">
    <citation type="journal article" date="2006" name="Nat. Biotechnol.">
        <title>The genome and transcriptomes of the anti-tumor agent Clostridium novyi-NT.</title>
        <authorList>
            <person name="Bettegowda C."/>
            <person name="Huang X."/>
            <person name="Lin J."/>
            <person name="Cheong I."/>
            <person name="Kohli M."/>
            <person name="Szabo S.A."/>
            <person name="Zhang X."/>
            <person name="Diaz L.A. Jr."/>
            <person name="Velculescu V.E."/>
            <person name="Parmigiani G."/>
            <person name="Kinzler K.W."/>
            <person name="Vogelstein B."/>
            <person name="Zhou S."/>
        </authorList>
    </citation>
    <scope>NUCLEOTIDE SEQUENCE [LARGE SCALE GENOMIC DNA]</scope>
    <source>
        <strain>NT</strain>
    </source>
</reference>
<feature type="chain" id="PRO_0000321092" description="Aspartate carbamoyltransferase catalytic subunit">
    <location>
        <begin position="1"/>
        <end position="306"/>
    </location>
</feature>
<feature type="binding site" evidence="1">
    <location>
        <position position="54"/>
    </location>
    <ligand>
        <name>carbamoyl phosphate</name>
        <dbReference type="ChEBI" id="CHEBI:58228"/>
    </ligand>
</feature>
<feature type="binding site" evidence="1">
    <location>
        <position position="55"/>
    </location>
    <ligand>
        <name>carbamoyl phosphate</name>
        <dbReference type="ChEBI" id="CHEBI:58228"/>
    </ligand>
</feature>
<feature type="binding site" evidence="1">
    <location>
        <position position="83"/>
    </location>
    <ligand>
        <name>L-aspartate</name>
        <dbReference type="ChEBI" id="CHEBI:29991"/>
    </ligand>
</feature>
<feature type="binding site" evidence="1">
    <location>
        <position position="104"/>
    </location>
    <ligand>
        <name>carbamoyl phosphate</name>
        <dbReference type="ChEBI" id="CHEBI:58228"/>
    </ligand>
</feature>
<feature type="binding site" evidence="1">
    <location>
        <position position="132"/>
    </location>
    <ligand>
        <name>carbamoyl phosphate</name>
        <dbReference type="ChEBI" id="CHEBI:58228"/>
    </ligand>
</feature>
<feature type="binding site" evidence="1">
    <location>
        <position position="135"/>
    </location>
    <ligand>
        <name>carbamoyl phosphate</name>
        <dbReference type="ChEBI" id="CHEBI:58228"/>
    </ligand>
</feature>
<feature type="binding site" evidence="1">
    <location>
        <position position="165"/>
    </location>
    <ligand>
        <name>L-aspartate</name>
        <dbReference type="ChEBI" id="CHEBI:29991"/>
    </ligand>
</feature>
<feature type="binding site" evidence="1">
    <location>
        <position position="227"/>
    </location>
    <ligand>
        <name>L-aspartate</name>
        <dbReference type="ChEBI" id="CHEBI:29991"/>
    </ligand>
</feature>
<feature type="binding site" evidence="1">
    <location>
        <position position="266"/>
    </location>
    <ligand>
        <name>carbamoyl phosphate</name>
        <dbReference type="ChEBI" id="CHEBI:58228"/>
    </ligand>
</feature>
<feature type="binding site" evidence="1">
    <location>
        <position position="267"/>
    </location>
    <ligand>
        <name>carbamoyl phosphate</name>
        <dbReference type="ChEBI" id="CHEBI:58228"/>
    </ligand>
</feature>
<organism>
    <name type="scientific">Clostridium novyi (strain NT)</name>
    <dbReference type="NCBI Taxonomy" id="386415"/>
    <lineage>
        <taxon>Bacteria</taxon>
        <taxon>Bacillati</taxon>
        <taxon>Bacillota</taxon>
        <taxon>Clostridia</taxon>
        <taxon>Eubacteriales</taxon>
        <taxon>Clostridiaceae</taxon>
        <taxon>Clostridium</taxon>
    </lineage>
</organism>
<keyword id="KW-0665">Pyrimidine biosynthesis</keyword>
<keyword id="KW-1185">Reference proteome</keyword>
<keyword id="KW-0808">Transferase</keyword>
<comment type="function">
    <text evidence="1">Catalyzes the condensation of carbamoyl phosphate and aspartate to form carbamoyl aspartate and inorganic phosphate, the committed step in the de novo pyrimidine nucleotide biosynthesis pathway.</text>
</comment>
<comment type="catalytic activity">
    <reaction evidence="1">
        <text>carbamoyl phosphate + L-aspartate = N-carbamoyl-L-aspartate + phosphate + H(+)</text>
        <dbReference type="Rhea" id="RHEA:20013"/>
        <dbReference type="ChEBI" id="CHEBI:15378"/>
        <dbReference type="ChEBI" id="CHEBI:29991"/>
        <dbReference type="ChEBI" id="CHEBI:32814"/>
        <dbReference type="ChEBI" id="CHEBI:43474"/>
        <dbReference type="ChEBI" id="CHEBI:58228"/>
        <dbReference type="EC" id="2.1.3.2"/>
    </reaction>
</comment>
<comment type="pathway">
    <text evidence="1">Pyrimidine metabolism; UMP biosynthesis via de novo pathway; (S)-dihydroorotate from bicarbonate: step 2/3.</text>
</comment>
<comment type="subunit">
    <text evidence="1">Heterododecamer (2C3:3R2) of six catalytic PyrB chains organized as two trimers (C3), and six regulatory PyrI chains organized as three dimers (R2).</text>
</comment>
<comment type="similarity">
    <text evidence="1">Belongs to the aspartate/ornithine carbamoyltransferase superfamily. ATCase family.</text>
</comment>